<gene>
    <name type="primary">CYSLTR1</name>
</gene>
<sequence length="340" mass="38984">MDETGNPTIPPASNNTCYDSIDDFRNQVYSTLYSMISVVGFFGNGFVLYVLVKTYHEKSAFQVYMINLAVADLLCVCTLPLRVAYYVHKGIWLFGDFLCRLSTYALYVNLYCSIFFMTAMSFFRCVAIVFPVQNISLVTQKKARLVCIAIWMFVILTSSPFLMANTYKDEKNNTKCFEPPQDNQAKNYVLILHYVSLFIGFIIPFITIIVCYTMIIFTLLKSSMKKNLSSRKRAIGMIIVVTAAFLVSFMPYHIQRTIHLHFLHNKTKPCDSILRMQKSVVITLSLAASNCCFDPLLYFFSGGNFRRRLSTIRKYSLSSMTYIPKKKTSLPQKGKDICKE</sequence>
<dbReference type="EMBL" id="AY236968">
    <property type="protein sequence ID" value="AAP75558.1"/>
    <property type="molecule type" value="mRNA"/>
</dbReference>
<dbReference type="RefSeq" id="NP_001166412.1">
    <property type="nucleotide sequence ID" value="NM_001172941.2"/>
</dbReference>
<dbReference type="SMR" id="Q2NNR5"/>
<dbReference type="FunCoup" id="Q2NNR5">
    <property type="interactions" value="1070"/>
</dbReference>
<dbReference type="STRING" id="10141.ENSCPOP00000001902"/>
<dbReference type="BindingDB" id="Q2NNR5"/>
<dbReference type="ChEMBL" id="CHEMBL5645"/>
<dbReference type="DrugCentral" id="Q2NNR5"/>
<dbReference type="GlyCosmos" id="Q2NNR5">
    <property type="glycosylation" value="3 sites, No reported glycans"/>
</dbReference>
<dbReference type="Ensembl" id="ENSCPOT00000002128.3">
    <property type="protein sequence ID" value="ENSCPOP00000001902.2"/>
    <property type="gene ID" value="ENSCPOG00000002100.4"/>
</dbReference>
<dbReference type="GeneID" id="100135514"/>
<dbReference type="KEGG" id="cpoc:100135514"/>
<dbReference type="CTD" id="10800"/>
<dbReference type="VEuPathDB" id="HostDB:ENSCPOG00000002100"/>
<dbReference type="eggNOG" id="ENOG502QUJU">
    <property type="taxonomic scope" value="Eukaryota"/>
</dbReference>
<dbReference type="GeneTree" id="ENSGT01130000278275"/>
<dbReference type="HOGENOM" id="CLU_009579_8_2_1"/>
<dbReference type="InParanoid" id="Q2NNR5"/>
<dbReference type="OMA" id="FMPYHVQ"/>
<dbReference type="OrthoDB" id="9990906at2759"/>
<dbReference type="TreeFam" id="TF350009"/>
<dbReference type="PRO" id="PR:Q2NNR5"/>
<dbReference type="Proteomes" id="UP000005447">
    <property type="component" value="Unassembled WGS sequence"/>
</dbReference>
<dbReference type="Bgee" id="ENSCPOG00000002100">
    <property type="expression patterns" value="Expressed in uterine cervix and 10 other cell types or tissues"/>
</dbReference>
<dbReference type="GO" id="GO:0005886">
    <property type="term" value="C:plasma membrane"/>
    <property type="evidence" value="ECO:0007669"/>
    <property type="project" value="UniProtKB-SubCell"/>
</dbReference>
<dbReference type="GO" id="GO:0004974">
    <property type="term" value="F:leukotriene receptor activity"/>
    <property type="evidence" value="ECO:0007669"/>
    <property type="project" value="Ensembl"/>
</dbReference>
<dbReference type="GO" id="GO:0006816">
    <property type="term" value="P:calcium ion transport"/>
    <property type="evidence" value="ECO:0007669"/>
    <property type="project" value="Ensembl"/>
</dbReference>
<dbReference type="GO" id="GO:0007166">
    <property type="term" value="P:cell surface receptor signaling pathway"/>
    <property type="evidence" value="ECO:0007669"/>
    <property type="project" value="Ensembl"/>
</dbReference>
<dbReference type="GO" id="GO:0006935">
    <property type="term" value="P:chemotaxis"/>
    <property type="evidence" value="ECO:0007669"/>
    <property type="project" value="Ensembl"/>
</dbReference>
<dbReference type="GO" id="GO:0051649">
    <property type="term" value="P:establishment of localization in cell"/>
    <property type="evidence" value="ECO:0007669"/>
    <property type="project" value="Ensembl"/>
</dbReference>
<dbReference type="GO" id="GO:0002437">
    <property type="term" value="P:inflammatory response to antigenic stimulus"/>
    <property type="evidence" value="ECO:0007669"/>
    <property type="project" value="Ensembl"/>
</dbReference>
<dbReference type="CDD" id="cd15158">
    <property type="entry name" value="7tmA_CysLTR1"/>
    <property type="match status" value="1"/>
</dbReference>
<dbReference type="FunFam" id="1.20.1070.10:FF:000017">
    <property type="entry name" value="lysophosphatidic acid receptor 4"/>
    <property type="match status" value="1"/>
</dbReference>
<dbReference type="Gene3D" id="1.20.1070.10">
    <property type="entry name" value="Rhodopsin 7-helix transmembrane proteins"/>
    <property type="match status" value="1"/>
</dbReference>
<dbReference type="InterPro" id="IPR013310">
    <property type="entry name" value="CLT1_recept"/>
</dbReference>
<dbReference type="InterPro" id="IPR004071">
    <property type="entry name" value="Cyst_leuk_rcpt"/>
</dbReference>
<dbReference type="InterPro" id="IPR000276">
    <property type="entry name" value="GPCR_Rhodpsn"/>
</dbReference>
<dbReference type="InterPro" id="IPR017452">
    <property type="entry name" value="GPCR_Rhodpsn_7TM"/>
</dbReference>
<dbReference type="PANTHER" id="PTHR24231:SF45">
    <property type="entry name" value="CYSTEINYL LEUKOTRIENE RECEPTOR 1"/>
    <property type="match status" value="1"/>
</dbReference>
<dbReference type="PANTHER" id="PTHR24231">
    <property type="entry name" value="PURINOCEPTOR-RELATED G-PROTEIN COUPLED RECEPTOR"/>
    <property type="match status" value="1"/>
</dbReference>
<dbReference type="Pfam" id="PF00001">
    <property type="entry name" value="7tm_1"/>
    <property type="match status" value="1"/>
</dbReference>
<dbReference type="PRINTS" id="PR01902">
    <property type="entry name" value="CYSLT1RECPTR"/>
</dbReference>
<dbReference type="PRINTS" id="PR01533">
    <property type="entry name" value="CYSLTRECPTR"/>
</dbReference>
<dbReference type="PRINTS" id="PR00237">
    <property type="entry name" value="GPCRRHODOPSN"/>
</dbReference>
<dbReference type="SUPFAM" id="SSF81321">
    <property type="entry name" value="Family A G protein-coupled receptor-like"/>
    <property type="match status" value="1"/>
</dbReference>
<dbReference type="PROSITE" id="PS50262">
    <property type="entry name" value="G_PROTEIN_RECEP_F1_2"/>
    <property type="match status" value="1"/>
</dbReference>
<name>CLTR1_CAVPO</name>
<keyword id="KW-1003">Cell membrane</keyword>
<keyword id="KW-1015">Disulfide bond</keyword>
<keyword id="KW-0297">G-protein coupled receptor</keyword>
<keyword id="KW-0325">Glycoprotein</keyword>
<keyword id="KW-0472">Membrane</keyword>
<keyword id="KW-0675">Receptor</keyword>
<keyword id="KW-1185">Reference proteome</keyword>
<keyword id="KW-0807">Transducer</keyword>
<keyword id="KW-0812">Transmembrane</keyword>
<keyword id="KW-1133">Transmembrane helix</keyword>
<protein>
    <recommendedName>
        <fullName>Cysteinyl leukotriene receptor 1</fullName>
        <shortName>CysLTR1</shortName>
    </recommendedName>
    <alternativeName>
        <fullName>Cysteinyl leukotriene D4 receptor</fullName>
        <shortName>LTD4 receptor</shortName>
    </alternativeName>
</protein>
<reference key="1">
    <citation type="submission" date="2003-02" db="EMBL/GenBank/DDBJ databases">
        <title>Molecular cloning and functional characterization of guinea pig cysteinyl leukotriene receptor 1 and 2.</title>
        <authorList>
            <person name="Ito Y."/>
            <person name="Nishimura Y."/>
            <person name="Tanaka T."/>
        </authorList>
    </citation>
    <scope>NUCLEOTIDE SEQUENCE [MRNA]</scope>
</reference>
<comment type="function">
    <text evidence="1">Receptor for cysteinyl leukotrienes mediating bronchoconstriction of individuals with and without asthma. Stimulation by LTD4 results in the contraction and proliferation of smooth muscle, edema, eosinophil migration and damage to the mucus layer in the lung. This response is mediated via a G-protein that activates a phosphatidylinositol-calcium second messenger system (By similarity).</text>
</comment>
<comment type="subcellular location">
    <subcellularLocation>
        <location evidence="1">Cell membrane</location>
        <topology evidence="1">Multi-pass membrane protein</topology>
    </subcellularLocation>
</comment>
<comment type="similarity">
    <text evidence="3">Belongs to the G-protein coupled receptor 1 family.</text>
</comment>
<evidence type="ECO:0000250" key="1"/>
<evidence type="ECO:0000255" key="2"/>
<evidence type="ECO:0000255" key="3">
    <source>
        <dbReference type="PROSITE-ProRule" id="PRU00521"/>
    </source>
</evidence>
<organism>
    <name type="scientific">Cavia porcellus</name>
    <name type="common">Guinea pig</name>
    <dbReference type="NCBI Taxonomy" id="10141"/>
    <lineage>
        <taxon>Eukaryota</taxon>
        <taxon>Metazoa</taxon>
        <taxon>Chordata</taxon>
        <taxon>Craniata</taxon>
        <taxon>Vertebrata</taxon>
        <taxon>Euteleostomi</taxon>
        <taxon>Mammalia</taxon>
        <taxon>Eutheria</taxon>
        <taxon>Euarchontoglires</taxon>
        <taxon>Glires</taxon>
        <taxon>Rodentia</taxon>
        <taxon>Hystricomorpha</taxon>
        <taxon>Caviidae</taxon>
        <taxon>Cavia</taxon>
    </lineage>
</organism>
<proteinExistence type="evidence at transcript level"/>
<feature type="chain" id="PRO_0000281573" description="Cysteinyl leukotriene receptor 1">
    <location>
        <begin position="1"/>
        <end position="340"/>
    </location>
</feature>
<feature type="topological domain" description="Extracellular" evidence="2">
    <location>
        <begin position="1"/>
        <end position="31"/>
    </location>
</feature>
<feature type="transmembrane region" description="Helical; Name=1" evidence="2">
    <location>
        <begin position="32"/>
        <end position="52"/>
    </location>
</feature>
<feature type="topological domain" description="Cytoplasmic" evidence="2">
    <location>
        <begin position="53"/>
        <end position="60"/>
    </location>
</feature>
<feature type="transmembrane region" description="Helical; Name=2" evidence="2">
    <location>
        <begin position="61"/>
        <end position="81"/>
    </location>
</feature>
<feature type="topological domain" description="Extracellular" evidence="2">
    <location>
        <begin position="82"/>
        <end position="109"/>
    </location>
</feature>
<feature type="transmembrane region" description="Helical; Name=3" evidence="2">
    <location>
        <begin position="110"/>
        <end position="130"/>
    </location>
</feature>
<feature type="topological domain" description="Cytoplasmic" evidence="2">
    <location>
        <begin position="131"/>
        <end position="144"/>
    </location>
</feature>
<feature type="transmembrane region" description="Helical; Name=4" evidence="2">
    <location>
        <begin position="145"/>
        <end position="165"/>
    </location>
</feature>
<feature type="topological domain" description="Extracellular" evidence="2">
    <location>
        <begin position="166"/>
        <end position="196"/>
    </location>
</feature>
<feature type="transmembrane region" description="Helical; Name=5" evidence="2">
    <location>
        <begin position="197"/>
        <end position="217"/>
    </location>
</feature>
<feature type="topological domain" description="Cytoplasmic" evidence="2">
    <location>
        <begin position="218"/>
        <end position="233"/>
    </location>
</feature>
<feature type="transmembrane region" description="Helical; Name=6" evidence="2">
    <location>
        <begin position="234"/>
        <end position="254"/>
    </location>
</feature>
<feature type="topological domain" description="Extracellular" evidence="2">
    <location>
        <begin position="255"/>
        <end position="279"/>
    </location>
</feature>
<feature type="transmembrane region" description="Helical; Name=7" evidence="2">
    <location>
        <begin position="280"/>
        <end position="300"/>
    </location>
</feature>
<feature type="topological domain" description="Cytoplasmic" evidence="2">
    <location>
        <begin position="301"/>
        <end position="340"/>
    </location>
</feature>
<feature type="glycosylation site" description="N-linked (GlcNAc...) asparagine" evidence="2">
    <location>
        <position position="14"/>
    </location>
</feature>
<feature type="glycosylation site" description="N-linked (GlcNAc...) asparagine" evidence="2">
    <location>
        <position position="172"/>
    </location>
</feature>
<feature type="glycosylation site" description="N-linked (GlcNAc...) asparagine" evidence="2">
    <location>
        <position position="265"/>
    </location>
</feature>
<feature type="disulfide bond" evidence="3">
    <location>
        <begin position="99"/>
        <end position="176"/>
    </location>
</feature>
<accession>Q2NNR5</accession>